<dbReference type="EMBL" id="AY935253">
    <property type="protein sequence ID" value="AAY21184.1"/>
    <property type="molecule type" value="mRNA"/>
</dbReference>
<dbReference type="SMR" id="A1L018"/>
<dbReference type="GlyCosmos" id="A1L018">
    <property type="glycosylation" value="1 site, No reported glycans"/>
</dbReference>
<dbReference type="VEuPathDB" id="FungiDB:PITG_14891"/>
<dbReference type="GO" id="GO:0005576">
    <property type="term" value="C:extracellular region"/>
    <property type="evidence" value="ECO:0007669"/>
    <property type="project" value="UniProtKB-SubCell"/>
</dbReference>
<dbReference type="GO" id="GO:0004869">
    <property type="term" value="F:cysteine-type endopeptidase inhibitor activity"/>
    <property type="evidence" value="ECO:0007669"/>
    <property type="project" value="UniProtKB-KW"/>
</dbReference>
<dbReference type="CDD" id="cd00042">
    <property type="entry name" value="CY"/>
    <property type="match status" value="1"/>
</dbReference>
<dbReference type="Gene3D" id="3.10.450.10">
    <property type="match status" value="1"/>
</dbReference>
<dbReference type="InterPro" id="IPR000010">
    <property type="entry name" value="Cystatin_dom"/>
</dbReference>
<dbReference type="InterPro" id="IPR046350">
    <property type="entry name" value="Cystatin_sf"/>
</dbReference>
<dbReference type="SUPFAM" id="SSF54403">
    <property type="entry name" value="Cystatin/monellin"/>
    <property type="match status" value="1"/>
</dbReference>
<name>EPIC3_PHYIN</name>
<gene>
    <name evidence="5" type="primary">EPIC3</name>
</gene>
<comment type="function">
    <text evidence="7">Secreted effector that interacts with and inhibits host apoplastic pathogenesis-related papain-like cysteine proteases (Probable). Inhibition of host proteases by a pathogen extracellular protease inhibitor forms a specific type of defense-counterdefense mechanism between plants and microbial pathogens (Probable).</text>
</comment>
<comment type="subcellular location">
    <subcellularLocation>
        <location evidence="7">Secreted</location>
    </subcellularLocation>
    <text evidence="7">Localizes to host apoplast where it targets defense proteases for inhibition.</text>
</comment>
<comment type="induction">
    <text evidence="4">Expressed during infection of host plant and in germinating cysts.</text>
</comment>
<comment type="similarity">
    <text evidence="6">Belongs to the cystatin family.</text>
</comment>
<proteinExistence type="evidence at transcript level"/>
<sequence length="131" mass="14125">MAFTRSIALFAGLALAASSAQEATILGGYTQKNATSDDIELLTQATSSANMYNKNVDTRICLIAIENLETQTVAGTNYKFQVAGCPVETDDELGACDDRNCDYSSYNIVIFSQPWSDTIEVTSITPAEYQG</sequence>
<reference key="1">
    <citation type="journal article" date="2007" name="Plant Physiol.">
        <title>A Phytophthora infestans cystatin-like protein targets a novel tomato papain-like apoplastic protease.</title>
        <authorList>
            <person name="Tian M."/>
            <person name="Win J."/>
            <person name="Song J."/>
            <person name="van der Hoorn R."/>
            <person name="van der Knaap E."/>
            <person name="Kamoun S."/>
        </authorList>
    </citation>
    <scope>NUCLEOTIDE SEQUENCE [MRNA]</scope>
    <scope>INDUCTION</scope>
    <source>
        <strain>90128</strain>
    </source>
</reference>
<evidence type="ECO:0000250" key="1">
    <source>
        <dbReference type="UniProtKB" id="P01040"/>
    </source>
</evidence>
<evidence type="ECO:0000255" key="2"/>
<evidence type="ECO:0000255" key="3">
    <source>
        <dbReference type="PROSITE-ProRule" id="PRU00498"/>
    </source>
</evidence>
<evidence type="ECO:0000269" key="4">
    <source>
    </source>
</evidence>
<evidence type="ECO:0000303" key="5">
    <source>
    </source>
</evidence>
<evidence type="ECO:0000305" key="6"/>
<evidence type="ECO:0000305" key="7">
    <source>
    </source>
</evidence>
<protein>
    <recommendedName>
        <fullName evidence="5">Cystatin-like cysteine protease inhibitor EPIC3</fullName>
    </recommendedName>
    <alternativeName>
        <fullName evidence="5">Extracellular protease inhibitor with cystatin-like domain protein 3</fullName>
    </alternativeName>
    <alternativeName>
        <fullName evidence="5">Secreted effector EPIC3</fullName>
    </alternativeName>
</protein>
<keyword id="KW-0325">Glycoprotein</keyword>
<keyword id="KW-0646">Protease inhibitor</keyword>
<keyword id="KW-0964">Secreted</keyword>
<keyword id="KW-0732">Signal</keyword>
<keyword id="KW-0789">Thiol protease inhibitor</keyword>
<keyword id="KW-0843">Virulence</keyword>
<organism>
    <name type="scientific">Phytophthora infestans</name>
    <name type="common">Potato late blight agent</name>
    <name type="synonym">Botrytis infestans</name>
    <dbReference type="NCBI Taxonomy" id="4787"/>
    <lineage>
        <taxon>Eukaryota</taxon>
        <taxon>Sar</taxon>
        <taxon>Stramenopiles</taxon>
        <taxon>Oomycota</taxon>
        <taxon>Peronosporales</taxon>
        <taxon>Peronosporaceae</taxon>
        <taxon>Phytophthora</taxon>
    </lineage>
</organism>
<accession>A1L018</accession>
<feature type="signal peptide" evidence="2">
    <location>
        <begin position="1"/>
        <end position="20"/>
    </location>
</feature>
<feature type="chain" id="PRO_5002635797" description="Cystatin-like cysteine protease inhibitor EPIC3">
    <location>
        <begin position="21"/>
        <end position="131"/>
    </location>
</feature>
<feature type="short sequence motif" description="Secondary area of contact" evidence="1">
    <location>
        <begin position="71"/>
        <end position="75"/>
    </location>
</feature>
<feature type="site" description="Reactive site" evidence="1">
    <location>
        <position position="27"/>
    </location>
</feature>
<feature type="glycosylation site" description="N-linked (GlcNAc...) asparagine" evidence="3">
    <location>
        <position position="33"/>
    </location>
</feature>